<sequence length="193" mass="21497">MNIPNQITVFRVILIPFFILFALVDFGFGQISILGGNHIRIEILISAIIFVVASLSDFADGYLARKWQLVTNMGKFLDPLADKLLVASALIVMVQLGFTNSVVAIIIIAREFAVTGLRLLQIEQGFVSAAGQLGKIKTAVTMVAIIWILLGDPFVHYLRFPIGVWLLYIGVFFTILSGIEYFYKGRDVFKHSK</sequence>
<dbReference type="EC" id="2.7.8.5"/>
<dbReference type="EMBL" id="CP000029">
    <property type="protein sequence ID" value="AAW54227.1"/>
    <property type="molecule type" value="Genomic_DNA"/>
</dbReference>
<dbReference type="RefSeq" id="WP_002439546.1">
    <property type="nucleotide sequence ID" value="NC_002976.3"/>
</dbReference>
<dbReference type="SMR" id="Q5HPQ8"/>
<dbReference type="STRING" id="176279.SERP0850"/>
<dbReference type="KEGG" id="ser:SERP0850"/>
<dbReference type="eggNOG" id="COG0558">
    <property type="taxonomic scope" value="Bacteria"/>
</dbReference>
<dbReference type="HOGENOM" id="CLU_051314_2_3_9"/>
<dbReference type="UniPathway" id="UPA00084">
    <property type="reaction ID" value="UER00503"/>
</dbReference>
<dbReference type="Proteomes" id="UP000000531">
    <property type="component" value="Chromosome"/>
</dbReference>
<dbReference type="GO" id="GO:0005886">
    <property type="term" value="C:plasma membrane"/>
    <property type="evidence" value="ECO:0007669"/>
    <property type="project" value="UniProtKB-SubCell"/>
</dbReference>
<dbReference type="GO" id="GO:0008444">
    <property type="term" value="F:CDP-diacylglycerol-glycerol-3-phosphate 3-phosphatidyltransferase activity"/>
    <property type="evidence" value="ECO:0007669"/>
    <property type="project" value="UniProtKB-EC"/>
</dbReference>
<dbReference type="GO" id="GO:0006655">
    <property type="term" value="P:phosphatidylglycerol biosynthetic process"/>
    <property type="evidence" value="ECO:0007669"/>
    <property type="project" value="UniProtKB-UniPathway"/>
</dbReference>
<dbReference type="FunFam" id="1.20.120.1760:FF:000004">
    <property type="entry name" value="CDP-diacylglycerol--glycerol-3-phosphate 3-phosphatidyltransferase"/>
    <property type="match status" value="1"/>
</dbReference>
<dbReference type="Gene3D" id="1.20.120.1760">
    <property type="match status" value="1"/>
</dbReference>
<dbReference type="InterPro" id="IPR050324">
    <property type="entry name" value="CDP-alcohol_PTase-I"/>
</dbReference>
<dbReference type="InterPro" id="IPR000462">
    <property type="entry name" value="CDP-OH_P_trans"/>
</dbReference>
<dbReference type="InterPro" id="IPR043130">
    <property type="entry name" value="CDP-OH_PTrfase_TM_dom"/>
</dbReference>
<dbReference type="InterPro" id="IPR048254">
    <property type="entry name" value="CDP_ALCOHOL_P_TRANSF_CS"/>
</dbReference>
<dbReference type="InterPro" id="IPR004570">
    <property type="entry name" value="Phosphatidylglycerol_P_synth"/>
</dbReference>
<dbReference type="NCBIfam" id="TIGR00560">
    <property type="entry name" value="pgsA"/>
    <property type="match status" value="1"/>
</dbReference>
<dbReference type="PANTHER" id="PTHR14269:SF62">
    <property type="entry name" value="CDP-DIACYLGLYCEROL--GLYCEROL-3-PHOSPHATE 3-PHOSPHATIDYLTRANSFERASE 1, CHLOROPLASTIC"/>
    <property type="match status" value="1"/>
</dbReference>
<dbReference type="PANTHER" id="PTHR14269">
    <property type="entry name" value="CDP-DIACYLGLYCEROL--GLYCEROL-3-PHOSPHATE 3-PHOSPHATIDYLTRANSFERASE-RELATED"/>
    <property type="match status" value="1"/>
</dbReference>
<dbReference type="Pfam" id="PF01066">
    <property type="entry name" value="CDP-OH_P_transf"/>
    <property type="match status" value="1"/>
</dbReference>
<dbReference type="PIRSF" id="PIRSF000847">
    <property type="entry name" value="Phos_ph_gly_syn"/>
    <property type="match status" value="1"/>
</dbReference>
<dbReference type="PROSITE" id="PS00379">
    <property type="entry name" value="CDP_ALCOHOL_P_TRANSF"/>
    <property type="match status" value="1"/>
</dbReference>
<organism>
    <name type="scientific">Staphylococcus epidermidis (strain ATCC 35984 / DSM 28319 / BCRC 17069 / CCUG 31568 / BM 3577 / RP62A)</name>
    <dbReference type="NCBI Taxonomy" id="176279"/>
    <lineage>
        <taxon>Bacteria</taxon>
        <taxon>Bacillati</taxon>
        <taxon>Bacillota</taxon>
        <taxon>Bacilli</taxon>
        <taxon>Bacillales</taxon>
        <taxon>Staphylococcaceae</taxon>
        <taxon>Staphylococcus</taxon>
    </lineage>
</organism>
<proteinExistence type="inferred from homology"/>
<accession>Q5HPQ8</accession>
<feature type="chain" id="PRO_0000056791" description="CDP-diacylglycerol--glycerol-3-phosphate 3-phosphatidyltransferase">
    <location>
        <begin position="1"/>
        <end position="193"/>
    </location>
</feature>
<feature type="transmembrane region" description="Helical" evidence="2">
    <location>
        <begin position="7"/>
        <end position="29"/>
    </location>
</feature>
<feature type="transmembrane region" description="Helical" evidence="2">
    <location>
        <begin position="44"/>
        <end position="63"/>
    </location>
</feature>
<feature type="transmembrane region" description="Helical" evidence="2">
    <location>
        <begin position="84"/>
        <end position="106"/>
    </location>
</feature>
<feature type="transmembrane region" description="Helical" evidence="2">
    <location>
        <begin position="129"/>
        <end position="151"/>
    </location>
</feature>
<feature type="transmembrane region" description="Helical" evidence="2">
    <location>
        <begin position="157"/>
        <end position="179"/>
    </location>
</feature>
<evidence type="ECO:0000250" key="1"/>
<evidence type="ECO:0000255" key="2"/>
<evidence type="ECO:0000305" key="3"/>
<protein>
    <recommendedName>
        <fullName>CDP-diacylglycerol--glycerol-3-phosphate 3-phosphatidyltransferase</fullName>
        <ecNumber>2.7.8.5</ecNumber>
    </recommendedName>
    <alternativeName>
        <fullName>Phosphatidylglycerophosphate synthase</fullName>
        <shortName>PGP synthase</shortName>
    </alternativeName>
</protein>
<reference key="1">
    <citation type="journal article" date="2005" name="J. Bacteriol.">
        <title>Insights on evolution of virulence and resistance from the complete genome analysis of an early methicillin-resistant Staphylococcus aureus strain and a biofilm-producing methicillin-resistant Staphylococcus epidermidis strain.</title>
        <authorList>
            <person name="Gill S.R."/>
            <person name="Fouts D.E."/>
            <person name="Archer G.L."/>
            <person name="Mongodin E.F."/>
            <person name="DeBoy R.T."/>
            <person name="Ravel J."/>
            <person name="Paulsen I.T."/>
            <person name="Kolonay J.F."/>
            <person name="Brinkac L.M."/>
            <person name="Beanan M.J."/>
            <person name="Dodson R.J."/>
            <person name="Daugherty S.C."/>
            <person name="Madupu R."/>
            <person name="Angiuoli S.V."/>
            <person name="Durkin A.S."/>
            <person name="Haft D.H."/>
            <person name="Vamathevan J.J."/>
            <person name="Khouri H."/>
            <person name="Utterback T.R."/>
            <person name="Lee C."/>
            <person name="Dimitrov G."/>
            <person name="Jiang L."/>
            <person name="Qin H."/>
            <person name="Weidman J."/>
            <person name="Tran K."/>
            <person name="Kang K.H."/>
            <person name="Hance I.R."/>
            <person name="Nelson K.E."/>
            <person name="Fraser C.M."/>
        </authorList>
    </citation>
    <scope>NUCLEOTIDE SEQUENCE [LARGE SCALE GENOMIC DNA]</scope>
    <source>
        <strain>ATCC 35984 / DSM 28319 / BCRC 17069 / CCUG 31568 / BM 3577 / RP62A</strain>
    </source>
</reference>
<name>PGSA_STAEQ</name>
<comment type="function">
    <text evidence="1">This protein catalyzes the committed step to the synthesis of the acidic phospholipids.</text>
</comment>
<comment type="catalytic activity">
    <reaction>
        <text>a CDP-1,2-diacyl-sn-glycerol + sn-glycerol 3-phosphate = a 1,2-diacyl-sn-glycero-3-phospho-(1'-sn-glycero-3'-phosphate) + CMP + H(+)</text>
        <dbReference type="Rhea" id="RHEA:12593"/>
        <dbReference type="ChEBI" id="CHEBI:15378"/>
        <dbReference type="ChEBI" id="CHEBI:57597"/>
        <dbReference type="ChEBI" id="CHEBI:58332"/>
        <dbReference type="ChEBI" id="CHEBI:60110"/>
        <dbReference type="ChEBI" id="CHEBI:60377"/>
        <dbReference type="EC" id="2.7.8.5"/>
    </reaction>
</comment>
<comment type="pathway">
    <text>Phospholipid metabolism; phosphatidylglycerol biosynthesis; phosphatidylglycerol from CDP-diacylglycerol: step 1/2.</text>
</comment>
<comment type="subcellular location">
    <subcellularLocation>
        <location evidence="1">Cell membrane</location>
        <topology evidence="1">Multi-pass membrane protein</topology>
    </subcellularLocation>
</comment>
<comment type="similarity">
    <text evidence="3">Belongs to the CDP-alcohol phosphatidyltransferase class-I family.</text>
</comment>
<keyword id="KW-1003">Cell membrane</keyword>
<keyword id="KW-0444">Lipid biosynthesis</keyword>
<keyword id="KW-0443">Lipid metabolism</keyword>
<keyword id="KW-0472">Membrane</keyword>
<keyword id="KW-0594">Phospholipid biosynthesis</keyword>
<keyword id="KW-1208">Phospholipid metabolism</keyword>
<keyword id="KW-1185">Reference proteome</keyword>
<keyword id="KW-0808">Transferase</keyword>
<keyword id="KW-0812">Transmembrane</keyword>
<keyword id="KW-1133">Transmembrane helix</keyword>
<gene>
    <name type="primary">pgsA</name>
    <name type="ordered locus">SERP0850</name>
</gene>